<sequence>MADKAQLQEAIKTQGEVVRKLKSEKASKEQIDEEVARLLQLKAQLGGDEGKHVFVLKTAKGTRDYNPKQMAIREKVFNIIINCFKRHGAETIDSPVFELKETLTGKYGEDSKLIYDLKDQGGELLSLRYDLTVPFARYLAMNKITNIKRYHIAKVYRRDNPAMTRGRYREFYQCDFDIAGQYDAMIPDAECLKLVYEILSELDLGDFRIKVNDRRILDGMFAICGVPDEKFRTICSTVDKLDKLAWEEVKKEMVNEKGLSEEVADRIRDYVSMQGGKDLAERLLQDPKLSQSKQACAGITDMKLLFSYLELFQITDKVVFDLSLARGLDYYTGVIYEAILTQANPAPASTPAEQNGAEDAGVSVGSVAGGGRYDGLVGMFDPKGRKVPCVGVSIGIERVFSIMEQKAELSSEKVRTTETQVLVASAQKNLLEERLKLTAELWNAGIKAEVLYKKNPKLLSQLQHCEDTGIPLVAILGEQELKDGVVKLRNVASREEVDVPRAELVDEVKKRTS</sequence>
<comment type="function">
    <text evidence="1">Catalyzes the aminoacylation of histidyl-tRNA.</text>
</comment>
<comment type="catalytic activity">
    <reaction evidence="1">
        <text>tRNA(His) + L-histidine + ATP = L-histidyl-tRNA(His) + AMP + diphosphate + H(+)</text>
        <dbReference type="Rhea" id="RHEA:17313"/>
        <dbReference type="Rhea" id="RHEA-COMP:9665"/>
        <dbReference type="Rhea" id="RHEA-COMP:9689"/>
        <dbReference type="ChEBI" id="CHEBI:15378"/>
        <dbReference type="ChEBI" id="CHEBI:30616"/>
        <dbReference type="ChEBI" id="CHEBI:33019"/>
        <dbReference type="ChEBI" id="CHEBI:57595"/>
        <dbReference type="ChEBI" id="CHEBI:78442"/>
        <dbReference type="ChEBI" id="CHEBI:78527"/>
        <dbReference type="ChEBI" id="CHEBI:456215"/>
        <dbReference type="EC" id="6.1.1.21"/>
    </reaction>
</comment>
<comment type="subcellular location">
    <molecule>Isoform 1</molecule>
    <subcellularLocation>
        <location evidence="4">Cytoplasm</location>
    </subcellularLocation>
</comment>
<comment type="subcellular location">
    <molecule>Isoform 2</molecule>
    <subcellularLocation>
        <location evidence="4">Mitochondrion</location>
    </subcellularLocation>
</comment>
<comment type="alternative products">
    <event type="alternative splicing"/>
    <isoform>
        <id>E9QI36-1</id>
        <name>1</name>
        <name evidence="5">Hars-002</name>
        <sequence type="displayed"/>
    </isoform>
    <isoform>
        <id>E9QI36-2</id>
        <name>2</name>
        <name evidence="5">Hars-001</name>
        <sequence type="described" ref="VSP_060465"/>
    </isoform>
</comment>
<comment type="miscellaneous">
    <text evidence="5">Danio rerio genome encodes a single hars gene which undergoes alternative splicing to produce both a cytoplasmic and mitochondrial enzyme, while humans have two separate genes.</text>
</comment>
<comment type="similarity">
    <text evidence="6">Belongs to the class-II aminoacyl-tRNA synthetase family.</text>
</comment>
<name>HARS1_DANRE</name>
<proteinExistence type="inferred from homology"/>
<keyword id="KW-0025">Alternative splicing</keyword>
<keyword id="KW-0030">Aminoacyl-tRNA synthetase</keyword>
<keyword id="KW-0067">ATP-binding</keyword>
<keyword id="KW-0963">Cytoplasm</keyword>
<keyword id="KW-0436">Ligase</keyword>
<keyword id="KW-0496">Mitochondrion</keyword>
<keyword id="KW-0547">Nucleotide-binding</keyword>
<keyword id="KW-0648">Protein biosynthesis</keyword>
<keyword id="KW-1185">Reference proteome</keyword>
<dbReference type="EC" id="6.1.1.21" evidence="1"/>
<dbReference type="EMBL" id="BX890575">
    <property type="status" value="NOT_ANNOTATED_CDS"/>
    <property type="molecule type" value="Genomic_DNA"/>
</dbReference>
<dbReference type="RefSeq" id="NP_001289185.1">
    <molecule id="E9QI36-2"/>
    <property type="nucleotide sequence ID" value="NM_001302256.1"/>
</dbReference>
<dbReference type="RefSeq" id="NP_001289191.1">
    <molecule id="E9QI36-1"/>
    <property type="nucleotide sequence ID" value="NM_001302262.1"/>
</dbReference>
<dbReference type="SMR" id="E9QI36"/>
<dbReference type="FunCoup" id="E9QI36">
    <property type="interactions" value="2329"/>
</dbReference>
<dbReference type="STRING" id="7955.ENSDARP00000123163"/>
<dbReference type="PaxDb" id="7955-ENSDARP00000123163"/>
<dbReference type="PeptideAtlas" id="E9QI36"/>
<dbReference type="Ensembl" id="ENSDART00000142158">
    <molecule id="E9QI36-1"/>
    <property type="protein sequence ID" value="ENSDARP00000113894"/>
    <property type="gene ID" value="ENSDARG00000003693"/>
</dbReference>
<dbReference type="GeneID" id="447847"/>
<dbReference type="KEGG" id="dre:447847"/>
<dbReference type="AGR" id="ZFIN:ZDB-GENE-040912-152"/>
<dbReference type="CTD" id="447847"/>
<dbReference type="ZFIN" id="ZDB-GENE-040912-152">
    <property type="gene designation" value="hars"/>
</dbReference>
<dbReference type="eggNOG" id="KOG1936">
    <property type="taxonomic scope" value="Eukaryota"/>
</dbReference>
<dbReference type="HOGENOM" id="CLU_025113_4_2_1"/>
<dbReference type="InParanoid" id="E9QI36"/>
<dbReference type="OMA" id="CGGGNFK"/>
<dbReference type="OrthoDB" id="1906957at2759"/>
<dbReference type="TreeFam" id="TF300652"/>
<dbReference type="PRO" id="PR:E9QI36"/>
<dbReference type="Proteomes" id="UP000000437">
    <property type="component" value="Chromosome 14"/>
</dbReference>
<dbReference type="Bgee" id="ENSDARG00000003693">
    <property type="expression patterns" value="Expressed in somite and 35 other cell types or tissues"/>
</dbReference>
<dbReference type="ExpressionAtlas" id="E9QI36">
    <property type="expression patterns" value="baseline and differential"/>
</dbReference>
<dbReference type="GO" id="GO:0005737">
    <property type="term" value="C:cytoplasm"/>
    <property type="evidence" value="ECO:0000314"/>
    <property type="project" value="UniProtKB"/>
</dbReference>
<dbReference type="GO" id="GO:0005829">
    <property type="term" value="C:cytosol"/>
    <property type="evidence" value="ECO:0000318"/>
    <property type="project" value="GO_Central"/>
</dbReference>
<dbReference type="GO" id="GO:0005739">
    <property type="term" value="C:mitochondrion"/>
    <property type="evidence" value="ECO:0000314"/>
    <property type="project" value="UniProtKB"/>
</dbReference>
<dbReference type="GO" id="GO:0005524">
    <property type="term" value="F:ATP binding"/>
    <property type="evidence" value="ECO:0007669"/>
    <property type="project" value="UniProtKB-KW"/>
</dbReference>
<dbReference type="GO" id="GO:0004821">
    <property type="term" value="F:histidine-tRNA ligase activity"/>
    <property type="evidence" value="ECO:0000318"/>
    <property type="project" value="GO_Central"/>
</dbReference>
<dbReference type="GO" id="GO:0042802">
    <property type="term" value="F:identical protein binding"/>
    <property type="evidence" value="ECO:0000318"/>
    <property type="project" value="GO_Central"/>
</dbReference>
<dbReference type="GO" id="GO:0003723">
    <property type="term" value="F:RNA binding"/>
    <property type="evidence" value="ECO:0000318"/>
    <property type="project" value="GO_Central"/>
</dbReference>
<dbReference type="GO" id="GO:0006427">
    <property type="term" value="P:histidyl-tRNA aminoacylation"/>
    <property type="evidence" value="ECO:0000318"/>
    <property type="project" value="GO_Central"/>
</dbReference>
<dbReference type="GO" id="GO:0032543">
    <property type="term" value="P:mitochondrial translation"/>
    <property type="evidence" value="ECO:0000318"/>
    <property type="project" value="GO_Central"/>
</dbReference>
<dbReference type="GO" id="GO:1901342">
    <property type="term" value="P:regulation of vasculature development"/>
    <property type="evidence" value="ECO:0000315"/>
    <property type="project" value="ZFIN"/>
</dbReference>
<dbReference type="GO" id="GO:0002040">
    <property type="term" value="P:sprouting angiogenesis"/>
    <property type="evidence" value="ECO:0000315"/>
    <property type="project" value="ZFIN"/>
</dbReference>
<dbReference type="CDD" id="cd00773">
    <property type="entry name" value="HisRS-like_core"/>
    <property type="match status" value="1"/>
</dbReference>
<dbReference type="CDD" id="cd00859">
    <property type="entry name" value="HisRS_anticodon"/>
    <property type="match status" value="1"/>
</dbReference>
<dbReference type="CDD" id="cd00938">
    <property type="entry name" value="HisRS_RNA"/>
    <property type="match status" value="1"/>
</dbReference>
<dbReference type="FunFam" id="3.40.50.800:FF:000008">
    <property type="entry name" value="histidine--tRNA ligase, cytoplasmic isoform X1"/>
    <property type="match status" value="1"/>
</dbReference>
<dbReference type="FunFam" id="3.30.930.10:FF:000021">
    <property type="entry name" value="Probable histidine--tRNA ligase, mitochondrial"/>
    <property type="match status" value="1"/>
</dbReference>
<dbReference type="FunFam" id="1.10.287.10:FF:000028">
    <property type="entry name" value="Uncharacterized protein, isoform A"/>
    <property type="match status" value="1"/>
</dbReference>
<dbReference type="Gene3D" id="3.40.50.800">
    <property type="entry name" value="Anticodon-binding domain"/>
    <property type="match status" value="1"/>
</dbReference>
<dbReference type="Gene3D" id="3.30.930.10">
    <property type="entry name" value="Bira Bifunctional Protein, Domain 2"/>
    <property type="match status" value="1"/>
</dbReference>
<dbReference type="Gene3D" id="1.10.287.10">
    <property type="entry name" value="S15/NS1, RNA-binding"/>
    <property type="match status" value="1"/>
</dbReference>
<dbReference type="HAMAP" id="MF_00127">
    <property type="entry name" value="His_tRNA_synth"/>
    <property type="match status" value="1"/>
</dbReference>
<dbReference type="InterPro" id="IPR006195">
    <property type="entry name" value="aa-tRNA-synth_II"/>
</dbReference>
<dbReference type="InterPro" id="IPR045864">
    <property type="entry name" value="aa-tRNA-synth_II/BPL/LPL"/>
</dbReference>
<dbReference type="InterPro" id="IPR004154">
    <property type="entry name" value="Anticodon-bd"/>
</dbReference>
<dbReference type="InterPro" id="IPR036621">
    <property type="entry name" value="Anticodon-bd_dom_sf"/>
</dbReference>
<dbReference type="InterPro" id="IPR015807">
    <property type="entry name" value="His-tRNA-ligase"/>
</dbReference>
<dbReference type="InterPro" id="IPR041715">
    <property type="entry name" value="HisRS-like_core"/>
</dbReference>
<dbReference type="InterPro" id="IPR004516">
    <property type="entry name" value="HisRS/HisZ"/>
</dbReference>
<dbReference type="InterPro" id="IPR033656">
    <property type="entry name" value="HisRS_anticodon"/>
</dbReference>
<dbReference type="InterPro" id="IPR009068">
    <property type="entry name" value="uS15_NS1_RNA-bd_sf"/>
</dbReference>
<dbReference type="InterPro" id="IPR000738">
    <property type="entry name" value="WHEP-TRS_dom"/>
</dbReference>
<dbReference type="NCBIfam" id="TIGR00442">
    <property type="entry name" value="hisS"/>
    <property type="match status" value="1"/>
</dbReference>
<dbReference type="PANTHER" id="PTHR11476:SF7">
    <property type="entry name" value="HISTIDINE--TRNA LIGASE"/>
    <property type="match status" value="1"/>
</dbReference>
<dbReference type="PANTHER" id="PTHR11476">
    <property type="entry name" value="HISTIDYL-TRNA SYNTHETASE"/>
    <property type="match status" value="1"/>
</dbReference>
<dbReference type="Pfam" id="PF03129">
    <property type="entry name" value="HGTP_anticodon"/>
    <property type="match status" value="1"/>
</dbReference>
<dbReference type="Pfam" id="PF13393">
    <property type="entry name" value="tRNA-synt_His"/>
    <property type="match status" value="1"/>
</dbReference>
<dbReference type="Pfam" id="PF00458">
    <property type="entry name" value="WHEP-TRS"/>
    <property type="match status" value="1"/>
</dbReference>
<dbReference type="PIRSF" id="PIRSF001549">
    <property type="entry name" value="His-tRNA_synth"/>
    <property type="match status" value="1"/>
</dbReference>
<dbReference type="SMART" id="SM00991">
    <property type="entry name" value="WHEP-TRS"/>
    <property type="match status" value="1"/>
</dbReference>
<dbReference type="SUPFAM" id="SSF52954">
    <property type="entry name" value="Class II aaRS ABD-related"/>
    <property type="match status" value="1"/>
</dbReference>
<dbReference type="SUPFAM" id="SSF55681">
    <property type="entry name" value="Class II aaRS and biotin synthetases"/>
    <property type="match status" value="1"/>
</dbReference>
<dbReference type="SUPFAM" id="SSF47060">
    <property type="entry name" value="S15/NS1 RNA-binding domain"/>
    <property type="match status" value="1"/>
</dbReference>
<dbReference type="PROSITE" id="PS50862">
    <property type="entry name" value="AA_TRNA_LIGASE_II"/>
    <property type="match status" value="1"/>
</dbReference>
<dbReference type="PROSITE" id="PS00762">
    <property type="entry name" value="WHEP_TRS_1"/>
    <property type="match status" value="1"/>
</dbReference>
<dbReference type="PROSITE" id="PS51185">
    <property type="entry name" value="WHEP_TRS_2"/>
    <property type="match status" value="1"/>
</dbReference>
<evidence type="ECO:0000250" key="1">
    <source>
        <dbReference type="UniProtKB" id="P12081"/>
    </source>
</evidence>
<evidence type="ECO:0000255" key="2"/>
<evidence type="ECO:0000255" key="3">
    <source>
        <dbReference type="PROSITE-ProRule" id="PRU00531"/>
    </source>
</evidence>
<evidence type="ECO:0000269" key="4">
    <source>
    </source>
</evidence>
<evidence type="ECO:0000303" key="5">
    <source>
    </source>
</evidence>
<evidence type="ECO:0000305" key="6"/>
<evidence type="ECO:0000312" key="7">
    <source>
        <dbReference type="ZFIN" id="ZDB-GENE-040912-152"/>
    </source>
</evidence>
<accession>E9QI36</accession>
<accession>F1Q5D5</accession>
<gene>
    <name evidence="7" type="primary">hars</name>
</gene>
<organism>
    <name type="scientific">Danio rerio</name>
    <name type="common">Zebrafish</name>
    <name type="synonym">Brachydanio rerio</name>
    <dbReference type="NCBI Taxonomy" id="7955"/>
    <lineage>
        <taxon>Eukaryota</taxon>
        <taxon>Metazoa</taxon>
        <taxon>Chordata</taxon>
        <taxon>Craniata</taxon>
        <taxon>Vertebrata</taxon>
        <taxon>Euteleostomi</taxon>
        <taxon>Actinopterygii</taxon>
        <taxon>Neopterygii</taxon>
        <taxon>Teleostei</taxon>
        <taxon>Ostariophysi</taxon>
        <taxon>Cypriniformes</taxon>
        <taxon>Danionidae</taxon>
        <taxon>Danioninae</taxon>
        <taxon>Danio</taxon>
    </lineage>
</organism>
<reference key="1">
    <citation type="journal article" date="2013" name="Nature">
        <title>The zebrafish reference genome sequence and its relationship to the human genome.</title>
        <authorList>
            <person name="Howe K."/>
            <person name="Clark M.D."/>
            <person name="Torroja C.F."/>
            <person name="Torrance J."/>
            <person name="Berthelot C."/>
            <person name="Muffato M."/>
            <person name="Collins J.E."/>
            <person name="Humphray S."/>
            <person name="McLaren K."/>
            <person name="Matthews L."/>
            <person name="McLaren S."/>
            <person name="Sealy I."/>
            <person name="Caccamo M."/>
            <person name="Churcher C."/>
            <person name="Scott C."/>
            <person name="Barrett J.C."/>
            <person name="Koch R."/>
            <person name="Rauch G.J."/>
            <person name="White S."/>
            <person name="Chow W."/>
            <person name="Kilian B."/>
            <person name="Quintais L.T."/>
            <person name="Guerra-Assuncao J.A."/>
            <person name="Zhou Y."/>
            <person name="Gu Y."/>
            <person name="Yen J."/>
            <person name="Vogel J.H."/>
            <person name="Eyre T."/>
            <person name="Redmond S."/>
            <person name="Banerjee R."/>
            <person name="Chi J."/>
            <person name="Fu B."/>
            <person name="Langley E."/>
            <person name="Maguire S.F."/>
            <person name="Laird G.K."/>
            <person name="Lloyd D."/>
            <person name="Kenyon E."/>
            <person name="Donaldson S."/>
            <person name="Sehra H."/>
            <person name="Almeida-King J."/>
            <person name="Loveland J."/>
            <person name="Trevanion S."/>
            <person name="Jones M."/>
            <person name="Quail M."/>
            <person name="Willey D."/>
            <person name="Hunt A."/>
            <person name="Burton J."/>
            <person name="Sims S."/>
            <person name="McLay K."/>
            <person name="Plumb B."/>
            <person name="Davis J."/>
            <person name="Clee C."/>
            <person name="Oliver K."/>
            <person name="Clark R."/>
            <person name="Riddle C."/>
            <person name="Elliot D."/>
            <person name="Threadgold G."/>
            <person name="Harden G."/>
            <person name="Ware D."/>
            <person name="Begum S."/>
            <person name="Mortimore B."/>
            <person name="Kerry G."/>
            <person name="Heath P."/>
            <person name="Phillimore B."/>
            <person name="Tracey A."/>
            <person name="Corby N."/>
            <person name="Dunn M."/>
            <person name="Johnson C."/>
            <person name="Wood J."/>
            <person name="Clark S."/>
            <person name="Pelan S."/>
            <person name="Griffiths G."/>
            <person name="Smith M."/>
            <person name="Glithero R."/>
            <person name="Howden P."/>
            <person name="Barker N."/>
            <person name="Lloyd C."/>
            <person name="Stevens C."/>
            <person name="Harley J."/>
            <person name="Holt K."/>
            <person name="Panagiotidis G."/>
            <person name="Lovell J."/>
            <person name="Beasley H."/>
            <person name="Henderson C."/>
            <person name="Gordon D."/>
            <person name="Auger K."/>
            <person name="Wright D."/>
            <person name="Collins J."/>
            <person name="Raisen C."/>
            <person name="Dyer L."/>
            <person name="Leung K."/>
            <person name="Robertson L."/>
            <person name="Ambridge K."/>
            <person name="Leongamornlert D."/>
            <person name="McGuire S."/>
            <person name="Gilderthorp R."/>
            <person name="Griffiths C."/>
            <person name="Manthravadi D."/>
            <person name="Nichol S."/>
            <person name="Barker G."/>
            <person name="Whitehead S."/>
            <person name="Kay M."/>
            <person name="Brown J."/>
            <person name="Murnane C."/>
            <person name="Gray E."/>
            <person name="Humphries M."/>
            <person name="Sycamore N."/>
            <person name="Barker D."/>
            <person name="Saunders D."/>
            <person name="Wallis J."/>
            <person name="Babbage A."/>
            <person name="Hammond S."/>
            <person name="Mashreghi-Mohammadi M."/>
            <person name="Barr L."/>
            <person name="Martin S."/>
            <person name="Wray P."/>
            <person name="Ellington A."/>
            <person name="Matthews N."/>
            <person name="Ellwood M."/>
            <person name="Woodmansey R."/>
            <person name="Clark G."/>
            <person name="Cooper J."/>
            <person name="Tromans A."/>
            <person name="Grafham D."/>
            <person name="Skuce C."/>
            <person name="Pandian R."/>
            <person name="Andrews R."/>
            <person name="Harrison E."/>
            <person name="Kimberley A."/>
            <person name="Garnett J."/>
            <person name="Fosker N."/>
            <person name="Hall R."/>
            <person name="Garner P."/>
            <person name="Kelly D."/>
            <person name="Bird C."/>
            <person name="Palmer S."/>
            <person name="Gehring I."/>
            <person name="Berger A."/>
            <person name="Dooley C.M."/>
            <person name="Ersan-Urun Z."/>
            <person name="Eser C."/>
            <person name="Geiger H."/>
            <person name="Geisler M."/>
            <person name="Karotki L."/>
            <person name="Kirn A."/>
            <person name="Konantz J."/>
            <person name="Konantz M."/>
            <person name="Oberlander M."/>
            <person name="Rudolph-Geiger S."/>
            <person name="Teucke M."/>
            <person name="Lanz C."/>
            <person name="Raddatz G."/>
            <person name="Osoegawa K."/>
            <person name="Zhu B."/>
            <person name="Rapp A."/>
            <person name="Widaa S."/>
            <person name="Langford C."/>
            <person name="Yang F."/>
            <person name="Schuster S.C."/>
            <person name="Carter N.P."/>
            <person name="Harrow J."/>
            <person name="Ning Z."/>
            <person name="Herrero J."/>
            <person name="Searle S.M."/>
            <person name="Enright A."/>
            <person name="Geisler R."/>
            <person name="Plasterk R.H."/>
            <person name="Lee C."/>
            <person name="Westerfield M."/>
            <person name="de Jong P.J."/>
            <person name="Zon L.I."/>
            <person name="Postlethwait J.H."/>
            <person name="Nusslein-Volhard C."/>
            <person name="Hubbard T.J."/>
            <person name="Roest Crollius H."/>
            <person name="Rogers J."/>
            <person name="Stemple D.L."/>
        </authorList>
    </citation>
    <scope>NUCLEOTIDE SEQUENCE [LARGE SCALE GENOMIC DNA]</scope>
    <source>
        <strain>Tuebingen</strain>
    </source>
</reference>
<reference key="2">
    <citation type="journal article" date="2017" name="PLoS ONE">
        <title>A single Danio rerio hars gene encodes both cytoplasmic and mitochondrial histidyl-tRNA synthetases.</title>
        <authorList>
            <person name="Waldron A.L."/>
            <person name="Cahan S.H."/>
            <person name="Francklyn C.S."/>
            <person name="Ebert A.M."/>
        </authorList>
    </citation>
    <scope>SUBCELLULAR LOCATION (ISOFORMS 1 AND 2)</scope>
    <scope>ALTERNATIVE SPLICING</scope>
</reference>
<feature type="chain" id="PRO_0000448899" description="Histidine--tRNA ligase">
    <location>
        <begin position="1"/>
        <end position="513"/>
    </location>
</feature>
<feature type="domain" description="WHEP-TRS" evidence="3">
    <location>
        <begin position="3"/>
        <end position="59"/>
    </location>
</feature>
<feature type="binding site" evidence="1">
    <location>
        <begin position="130"/>
        <end position="132"/>
    </location>
    <ligand>
        <name>L-histidine</name>
        <dbReference type="ChEBI" id="CHEBI:57595"/>
    </ligand>
</feature>
<feature type="binding site" evidence="1">
    <location>
        <position position="157"/>
    </location>
    <ligand>
        <name>L-histidine</name>
        <dbReference type="ChEBI" id="CHEBI:57595"/>
    </ligand>
</feature>
<feature type="binding site" evidence="1">
    <location>
        <position position="173"/>
    </location>
    <ligand>
        <name>L-histidine</name>
        <dbReference type="ChEBI" id="CHEBI:57595"/>
    </ligand>
</feature>
<feature type="binding site" evidence="1">
    <location>
        <position position="177"/>
    </location>
    <ligand>
        <name>L-histidine</name>
        <dbReference type="ChEBI" id="CHEBI:57595"/>
    </ligand>
</feature>
<feature type="binding site" evidence="1">
    <location>
        <position position="326"/>
    </location>
    <ligand>
        <name>L-histidine</name>
        <dbReference type="ChEBI" id="CHEBI:57595"/>
    </ligand>
</feature>
<feature type="binding site" evidence="1">
    <location>
        <begin position="330"/>
        <end position="331"/>
    </location>
    <ligand>
        <name>L-histidine</name>
        <dbReference type="ChEBI" id="CHEBI:57595"/>
    </ligand>
</feature>
<feature type="splice variant" id="VSP_060465" description="In isoform 2.">
    <original>DKAQLQEAIKTQGEVVRKLKSEKASKE</original>
    <variation>ALGLVSMRLCAGLMGRRSAVRLHSLRVCSGMTIS</variation>
    <location>
        <begin position="3"/>
        <end position="29"/>
    </location>
</feature>
<feature type="transit peptide" description="Mitochondrion" evidence="2">
    <location sequence="E9QI36-2">
        <begin position="1"/>
        <end position="24"/>
    </location>
</feature>
<protein>
    <recommendedName>
        <fullName>Histidine--tRNA ligase</fullName>
        <ecNumber evidence="1">6.1.1.21</ecNumber>
    </recommendedName>
</protein>